<dbReference type="EMBL" id="AE000657">
    <property type="protein sequence ID" value="AAC06792.1"/>
    <property type="molecule type" value="Genomic_DNA"/>
</dbReference>
<dbReference type="PIR" id="B70349">
    <property type="entry name" value="B70349"/>
</dbReference>
<dbReference type="RefSeq" id="NP_213382.1">
    <property type="nucleotide sequence ID" value="NC_000918.1"/>
</dbReference>
<dbReference type="RefSeq" id="WP_010880320.1">
    <property type="nucleotide sequence ID" value="NC_000918.1"/>
</dbReference>
<dbReference type="SMR" id="O66822"/>
<dbReference type="EnsemblBacteria" id="AAC06792">
    <property type="protein sequence ID" value="AAC06792"/>
    <property type="gene ID" value="aq_545"/>
</dbReference>
<dbReference type="KEGG" id="aae:aq_545"/>
<dbReference type="HOGENOM" id="CLU_705510_0_0_0"/>
<dbReference type="InParanoid" id="O66822"/>
<dbReference type="OrthoDB" id="10243at2"/>
<dbReference type="Proteomes" id="UP000000798">
    <property type="component" value="Chromosome"/>
</dbReference>
<keyword id="KW-1185">Reference proteome</keyword>
<proteinExistence type="predicted"/>
<sequence>MQMYTDGERVFISRNYRVEGISKKDWIEKGEKKVVWQSAKLSETPTLLTNTRFYLFGAGATYLMRMDRRSGQTEEIDFEKEIVDITSDLRDVYFITHEGIYKLDAERFEKAKIERLAVSDILEKPIKTLDMIEDYLYVCAGNWLYKIRKDGEKVMEKALVDVRKVLADYEGPVVITEDKVIYFTDELDTLANGFYEGEYIKAEHGAYQTYLLSSTHFSVFGRTGERIAHVEYEHYRTFTEGLNHIYYYDEKEGDITYAFKRDLLGDDFINIDLVDTIALIFASLMAVEKAGHRVRIKEKRGFIDVDVNHKHVDMEKIFLTLSKYFPEIFYLYKNPGYYDEIDNFAQNYDLFIKEGDQVKLNLDLLEKFSEIRQDFKTLQEDIVRDILPSRADFFQSSTM</sequence>
<feature type="chain" id="PRO_0000186868" description="Uncharacterized protein aq_545">
    <location>
        <begin position="1"/>
        <end position="399"/>
    </location>
</feature>
<name>Y545_AQUAE</name>
<protein>
    <recommendedName>
        <fullName>Uncharacterized protein aq_545</fullName>
    </recommendedName>
</protein>
<gene>
    <name type="ordered locus">aq_545</name>
</gene>
<organism>
    <name type="scientific">Aquifex aeolicus (strain VF5)</name>
    <dbReference type="NCBI Taxonomy" id="224324"/>
    <lineage>
        <taxon>Bacteria</taxon>
        <taxon>Pseudomonadati</taxon>
        <taxon>Aquificota</taxon>
        <taxon>Aquificia</taxon>
        <taxon>Aquificales</taxon>
        <taxon>Aquificaceae</taxon>
        <taxon>Aquifex</taxon>
    </lineage>
</organism>
<reference key="1">
    <citation type="journal article" date="1998" name="Nature">
        <title>The complete genome of the hyperthermophilic bacterium Aquifex aeolicus.</title>
        <authorList>
            <person name="Deckert G."/>
            <person name="Warren P.V."/>
            <person name="Gaasterland T."/>
            <person name="Young W.G."/>
            <person name="Lenox A.L."/>
            <person name="Graham D.E."/>
            <person name="Overbeek R."/>
            <person name="Snead M.A."/>
            <person name="Keller M."/>
            <person name="Aujay M."/>
            <person name="Huber R."/>
            <person name="Feldman R.A."/>
            <person name="Short J.M."/>
            <person name="Olsen G.J."/>
            <person name="Swanson R.V."/>
        </authorList>
    </citation>
    <scope>NUCLEOTIDE SEQUENCE [LARGE SCALE GENOMIC DNA]</scope>
    <source>
        <strain>VF5</strain>
    </source>
</reference>
<accession>O66822</accession>